<sequence length="514" mass="56163">MSSNRQAYYKNNAKEQIGKEKRNEEVVSIRKDKREEAISKRRNINTQIEDDSETSTTPPGPFDANLLRLTVAAAQSSDPAEQLTAVQQARKMLSTDRNPPIDDLIGSGILPVLVQCLSSTDPNLQFEAAWALTNIASGTSEQTQAVVNAGAVPLFLQLLSCGNLNVCEQSVWALGNIIGDGPHFRDYCLELGILQPLLQFINPEIPIGFLRNVTWVIVNLCRCKDPAPSPAVVRTILPALSLLIHHQDTNILIDTVWALSYLTDGGNEHIQMVIEAQVVTHLVPLLGHVDVKVQTAALRAVGNIVTGTDEQTQLVLDSGVLRFMPGLLAHYKEKINKEAVWFVSNITAGNQQQVQDVFDAGIMPMIIHLLDRGDFPTQKEAAWAISNVTISGRPNQVEQMVKLGVLRPFCAMLSCTDSQIIQVVLDGINNILKMAGEAAEQVTSEIEECGGLDKIENLQNHENEDIYKLAFEIIDNFFSSDDETGNVEGAQSSAFGGDVPPVPDAPNGGWNFGK</sequence>
<comment type="function">
    <text evidence="3 4">Binds specifically and directly to substrates containing either a simple or bipartite NLS motif (PubMed:11311162). Promotes docking of import substrates to the nuclear envelope (PubMed:11311162). Seems to act as a cytosolic receptor for both simple and bipartite NLS motifs (PubMed:11311162). Necessary for correct nucleoporin localization within the germline (PubMed:11311162). Essential gene for embryonic and larval development (PubMed:11311162). May be dispensable for axon development, but required for axon regeneration in both mechanosensory and motor neurons (PubMed:31417366). Required for oogenic development, ima-1 and ima-2 cannot functionally compensate for loss of ima-3 (PubMed:11311162).</text>
</comment>
<comment type="subunit">
    <text evidence="3 4 5">Forms a complex with an importin beta subunit (PubMed:11311162). May interact with transcription factor cebp-1 (via N-terminus) (PubMed:31417366). Interacts with cmk-1; affinity for cmk-1 is increased in the presence of Ca(2+) and calmodulin and leads to increased nuclear accumulation of cmk-1 in FLP neurons upon prolonged heat activation (PubMed:34766550).</text>
</comment>
<comment type="subcellular location">
    <subcellularLocation>
        <location evidence="3">Cytoplasm</location>
    </subcellularLocation>
    <subcellularLocation>
        <location evidence="3">Nucleus</location>
    </subcellularLocation>
</comment>
<comment type="tissue specificity">
    <text evidence="3 4">Expressed in larval and adult germline and somatic tissues, including neurons.</text>
</comment>
<comment type="developmental stage">
    <text evidence="3">Expressed at high levels throughout all developmental stages.</text>
</comment>
<comment type="disruption phenotype">
    <text evidence="4">Larval lethality (PubMed:31417366). Mechanosensory neurons are born and develop normally (PubMed:31417366). However, cre-mediated knockdown targeted to mechanosensory neurons severely impairs axon regrowth of mechanosensory PLM neurons after injury (PubMed:31417366).</text>
</comment>
<comment type="similarity">
    <text evidence="6">Belongs to the importin alpha family.</text>
</comment>
<protein>
    <recommendedName>
        <fullName>Importin subunit alpha-3</fullName>
    </recommendedName>
    <alternativeName>
        <fullName>Karyopherin subunit alpha-3</fullName>
    </alternativeName>
</protein>
<keyword id="KW-0963">Cytoplasm</keyword>
<keyword id="KW-0217">Developmental protein</keyword>
<keyword id="KW-0539">Nucleus</keyword>
<keyword id="KW-0653">Protein transport</keyword>
<keyword id="KW-1185">Reference proteome</keyword>
<keyword id="KW-0677">Repeat</keyword>
<keyword id="KW-0813">Transport</keyword>
<organism>
    <name type="scientific">Caenorhabditis elegans</name>
    <dbReference type="NCBI Taxonomy" id="6239"/>
    <lineage>
        <taxon>Eukaryota</taxon>
        <taxon>Metazoa</taxon>
        <taxon>Ecdysozoa</taxon>
        <taxon>Nematoda</taxon>
        <taxon>Chromadorea</taxon>
        <taxon>Rhabditida</taxon>
        <taxon>Rhabditina</taxon>
        <taxon>Rhabditomorpha</taxon>
        <taxon>Rhabditoidea</taxon>
        <taxon>Rhabditidae</taxon>
        <taxon>Peloderinae</taxon>
        <taxon>Caenorhabditis</taxon>
    </lineage>
</organism>
<evidence type="ECO:0000255" key="1">
    <source>
        <dbReference type="PROSITE-ProRule" id="PRU00561"/>
    </source>
</evidence>
<evidence type="ECO:0000256" key="2">
    <source>
        <dbReference type="SAM" id="MobiDB-lite"/>
    </source>
</evidence>
<evidence type="ECO:0000269" key="3">
    <source>
    </source>
</evidence>
<evidence type="ECO:0000269" key="4">
    <source>
    </source>
</evidence>
<evidence type="ECO:0000269" key="5">
    <source>
    </source>
</evidence>
<evidence type="ECO:0000305" key="6"/>
<accession>Q19969</accession>
<accession>O44925</accession>
<feature type="chain" id="PRO_0000120736" description="Importin subunit alpha-3">
    <location>
        <begin position="1"/>
        <end position="514"/>
    </location>
</feature>
<feature type="domain" description="IBB" evidence="1">
    <location>
        <begin position="1"/>
        <end position="51"/>
    </location>
</feature>
<feature type="repeat" description="ARM 1">
    <location>
        <begin position="101"/>
        <end position="142"/>
    </location>
</feature>
<feature type="repeat" description="ARM 2">
    <location>
        <begin position="143"/>
        <end position="187"/>
    </location>
</feature>
<feature type="repeat" description="ARM 3">
    <location>
        <begin position="188"/>
        <end position="226"/>
    </location>
</feature>
<feature type="repeat" description="ARM 4">
    <location>
        <begin position="227"/>
        <end position="271"/>
    </location>
</feature>
<feature type="repeat" description="ARM 5">
    <location>
        <begin position="272"/>
        <end position="311"/>
    </location>
</feature>
<feature type="repeat" description="ARM 6">
    <location>
        <begin position="312"/>
        <end position="353"/>
    </location>
</feature>
<feature type="repeat" description="ARM 7">
    <location>
        <begin position="354"/>
        <end position="393"/>
    </location>
</feature>
<feature type="repeat" description="ARM 8">
    <location>
        <begin position="394"/>
        <end position="436"/>
    </location>
</feature>
<feature type="region of interest" description="Disordered" evidence="2">
    <location>
        <begin position="1"/>
        <end position="62"/>
    </location>
</feature>
<feature type="region of interest" description="Disordered" evidence="2">
    <location>
        <begin position="485"/>
        <end position="514"/>
    </location>
</feature>
<feature type="compositionally biased region" description="Basic and acidic residues" evidence="2">
    <location>
        <begin position="12"/>
        <end position="39"/>
    </location>
</feature>
<dbReference type="EMBL" id="AF040995">
    <property type="protein sequence ID" value="AAB97171.1"/>
    <property type="molecule type" value="mRNA"/>
</dbReference>
<dbReference type="EMBL" id="FO081278">
    <property type="protein sequence ID" value="CCD70435.1"/>
    <property type="molecule type" value="Genomic_DNA"/>
</dbReference>
<dbReference type="PIR" id="G88733">
    <property type="entry name" value="G88733"/>
</dbReference>
<dbReference type="PIR" id="T42402">
    <property type="entry name" value="T42402"/>
</dbReference>
<dbReference type="RefSeq" id="NP_501227.1">
    <property type="nucleotide sequence ID" value="NM_068826.6"/>
</dbReference>
<dbReference type="SMR" id="Q19969"/>
<dbReference type="BioGRID" id="42651">
    <property type="interactions" value="59"/>
</dbReference>
<dbReference type="DIP" id="DIP-26417N"/>
<dbReference type="FunCoup" id="Q19969">
    <property type="interactions" value="3270"/>
</dbReference>
<dbReference type="IntAct" id="Q19969">
    <property type="interactions" value="18"/>
</dbReference>
<dbReference type="STRING" id="6239.F32E10.4.1"/>
<dbReference type="iPTMnet" id="Q19969"/>
<dbReference type="PaxDb" id="6239-F32E10.4"/>
<dbReference type="PeptideAtlas" id="Q19969"/>
<dbReference type="EnsemblMetazoa" id="F32E10.4.1">
    <property type="protein sequence ID" value="F32E10.4.1"/>
    <property type="gene ID" value="WBGene00002074"/>
</dbReference>
<dbReference type="GeneID" id="177533"/>
<dbReference type="KEGG" id="cel:CELE_F32E10.4"/>
<dbReference type="UCSC" id="F32E10.4.1">
    <property type="organism name" value="c. elegans"/>
</dbReference>
<dbReference type="AGR" id="WB:WBGene00002074"/>
<dbReference type="CTD" id="177533"/>
<dbReference type="WormBase" id="F32E10.4">
    <property type="protein sequence ID" value="CE20745"/>
    <property type="gene ID" value="WBGene00002074"/>
    <property type="gene designation" value="ima-3"/>
</dbReference>
<dbReference type="eggNOG" id="KOG0166">
    <property type="taxonomic scope" value="Eukaryota"/>
</dbReference>
<dbReference type="GeneTree" id="ENSGT01050000244891"/>
<dbReference type="HOGENOM" id="CLU_018084_6_0_1"/>
<dbReference type="InParanoid" id="Q19969"/>
<dbReference type="OMA" id="GGNEHIQ"/>
<dbReference type="OrthoDB" id="29145at2759"/>
<dbReference type="PhylomeDB" id="Q19969"/>
<dbReference type="SignaLink" id="Q19969"/>
<dbReference type="PRO" id="PR:Q19969"/>
<dbReference type="Proteomes" id="UP000001940">
    <property type="component" value="Chromosome IV"/>
</dbReference>
<dbReference type="Bgee" id="WBGene00002074">
    <property type="expression patterns" value="Expressed in pharyngeal muscle cell (C elegans) and 4 other cell types or tissues"/>
</dbReference>
<dbReference type="GO" id="GO:0005737">
    <property type="term" value="C:cytoplasm"/>
    <property type="evidence" value="ECO:0000314"/>
    <property type="project" value="UniProtKB"/>
</dbReference>
<dbReference type="GO" id="GO:0005635">
    <property type="term" value="C:nuclear envelope"/>
    <property type="evidence" value="ECO:0000314"/>
    <property type="project" value="WormBase"/>
</dbReference>
<dbReference type="GO" id="GO:0005643">
    <property type="term" value="C:nuclear pore"/>
    <property type="evidence" value="ECO:0000315"/>
    <property type="project" value="UniProtKB"/>
</dbReference>
<dbReference type="GO" id="GO:0005654">
    <property type="term" value="C:nucleoplasm"/>
    <property type="evidence" value="ECO:0000318"/>
    <property type="project" value="GO_Central"/>
</dbReference>
<dbReference type="GO" id="GO:0005634">
    <property type="term" value="C:nucleus"/>
    <property type="evidence" value="ECO:0000318"/>
    <property type="project" value="GO_Central"/>
</dbReference>
<dbReference type="GO" id="GO:0140297">
    <property type="term" value="F:DNA-binding transcription factor binding"/>
    <property type="evidence" value="ECO:0000353"/>
    <property type="project" value="UniProtKB"/>
</dbReference>
<dbReference type="GO" id="GO:0061608">
    <property type="term" value="F:nuclear import signal receptor activity"/>
    <property type="evidence" value="ECO:0000315"/>
    <property type="project" value="UniProtKB"/>
</dbReference>
<dbReference type="GO" id="GO:0008139">
    <property type="term" value="F:nuclear localization sequence binding"/>
    <property type="evidence" value="ECO:0000314"/>
    <property type="project" value="UniProtKB"/>
</dbReference>
<dbReference type="GO" id="GO:0009792">
    <property type="term" value="P:embryo development ending in birth or egg hatching"/>
    <property type="evidence" value="ECO:0000315"/>
    <property type="project" value="WormBase"/>
</dbReference>
<dbReference type="GO" id="GO:0007292">
    <property type="term" value="P:female gamete generation"/>
    <property type="evidence" value="ECO:0000315"/>
    <property type="project" value="UniProtKB"/>
</dbReference>
<dbReference type="GO" id="GO:0007276">
    <property type="term" value="P:gamete generation"/>
    <property type="evidence" value="ECO:0000315"/>
    <property type="project" value="WormBase"/>
</dbReference>
<dbReference type="GO" id="GO:0007127">
    <property type="term" value="P:meiosis I"/>
    <property type="evidence" value="ECO:0000315"/>
    <property type="project" value="WormBase"/>
</dbReference>
<dbReference type="GO" id="GO:0002119">
    <property type="term" value="P:nematode larval development"/>
    <property type="evidence" value="ECO:0000315"/>
    <property type="project" value="WormBase"/>
</dbReference>
<dbReference type="GO" id="GO:0006607">
    <property type="term" value="P:NLS-bearing protein import into nucleus"/>
    <property type="evidence" value="ECO:0000315"/>
    <property type="project" value="UniProtKB"/>
</dbReference>
<dbReference type="GO" id="GO:0006999">
    <property type="term" value="P:nuclear pore organization"/>
    <property type="evidence" value="ECO:0000315"/>
    <property type="project" value="WormBase"/>
</dbReference>
<dbReference type="GO" id="GO:0048477">
    <property type="term" value="P:oogenesis"/>
    <property type="evidence" value="ECO:0000315"/>
    <property type="project" value="WormBase"/>
</dbReference>
<dbReference type="GO" id="GO:0048691">
    <property type="term" value="P:positive regulation of axon extension involved in regeneration"/>
    <property type="evidence" value="ECO:0000315"/>
    <property type="project" value="UniProtKB"/>
</dbReference>
<dbReference type="GO" id="GO:0006606">
    <property type="term" value="P:protein import into nucleus"/>
    <property type="evidence" value="ECO:0000315"/>
    <property type="project" value="UniProtKB"/>
</dbReference>
<dbReference type="GO" id="GO:0022414">
    <property type="term" value="P:reproductive process"/>
    <property type="evidence" value="ECO:0000315"/>
    <property type="project" value="WormBase"/>
</dbReference>
<dbReference type="FunFam" id="1.25.10.10:FF:000009">
    <property type="entry name" value="Importin subunit alpha"/>
    <property type="match status" value="1"/>
</dbReference>
<dbReference type="Gene3D" id="1.20.5.690">
    <property type="entry name" value="Importin-alpha, importin-beta-binding domain"/>
    <property type="match status" value="1"/>
</dbReference>
<dbReference type="Gene3D" id="1.25.10.10">
    <property type="entry name" value="Leucine-rich Repeat Variant"/>
    <property type="match status" value="1"/>
</dbReference>
<dbReference type="InterPro" id="IPR011989">
    <property type="entry name" value="ARM-like"/>
</dbReference>
<dbReference type="InterPro" id="IPR016024">
    <property type="entry name" value="ARM-type_fold"/>
</dbReference>
<dbReference type="InterPro" id="IPR032413">
    <property type="entry name" value="Arm_3"/>
</dbReference>
<dbReference type="InterPro" id="IPR000225">
    <property type="entry name" value="Armadillo"/>
</dbReference>
<dbReference type="InterPro" id="IPR002652">
    <property type="entry name" value="Importin-a_IBB"/>
</dbReference>
<dbReference type="InterPro" id="IPR036975">
    <property type="entry name" value="Importin-a_IBB_sf"/>
</dbReference>
<dbReference type="InterPro" id="IPR024931">
    <property type="entry name" value="Importin_alpha"/>
</dbReference>
<dbReference type="PANTHER" id="PTHR23316">
    <property type="entry name" value="IMPORTIN ALPHA"/>
    <property type="match status" value="1"/>
</dbReference>
<dbReference type="Pfam" id="PF00514">
    <property type="entry name" value="Arm"/>
    <property type="match status" value="7"/>
</dbReference>
<dbReference type="Pfam" id="PF16186">
    <property type="entry name" value="Arm_3"/>
    <property type="match status" value="1"/>
</dbReference>
<dbReference type="Pfam" id="PF01749">
    <property type="entry name" value="IBB"/>
    <property type="match status" value="1"/>
</dbReference>
<dbReference type="PIRSF" id="PIRSF005673">
    <property type="entry name" value="Importin_alpha"/>
    <property type="match status" value="1"/>
</dbReference>
<dbReference type="SMART" id="SM00185">
    <property type="entry name" value="ARM"/>
    <property type="match status" value="8"/>
</dbReference>
<dbReference type="SUPFAM" id="SSF48371">
    <property type="entry name" value="ARM repeat"/>
    <property type="match status" value="1"/>
</dbReference>
<dbReference type="PROSITE" id="PS50176">
    <property type="entry name" value="ARM_REPEAT"/>
    <property type="match status" value="1"/>
</dbReference>
<dbReference type="PROSITE" id="PS51214">
    <property type="entry name" value="IBB"/>
    <property type="match status" value="1"/>
</dbReference>
<gene>
    <name type="primary">ima-3</name>
    <name type="ORF">F32E10.4</name>
</gene>
<name>IMA3_CAEEL</name>
<reference key="1">
    <citation type="journal article" date="2001" name="Development">
        <title>Germline and developmental roles of the nuclear transport factor importin alpha3 in C. elegans.</title>
        <authorList>
            <person name="Geles K.G."/>
            <person name="Adam S.A."/>
        </authorList>
    </citation>
    <scope>NUCLEOTIDE SEQUENCE [MRNA]</scope>
    <scope>FUNCTION</scope>
    <scope>SUBUNIT</scope>
    <scope>SUBCELLULAR LOCATION</scope>
    <scope>TISSUE SPECIFICITY</scope>
    <scope>DEVELOPMENTAL STAGE</scope>
</reference>
<reference key="2">
    <citation type="journal article" date="1998" name="Science">
        <title>Genome sequence of the nematode C. elegans: a platform for investigating biology.</title>
        <authorList>
            <consortium name="The C. elegans sequencing consortium"/>
        </authorList>
    </citation>
    <scope>NUCLEOTIDE SEQUENCE [LARGE SCALE GENOMIC DNA]</scope>
    <source>
        <strain>Bristol N2</strain>
    </source>
</reference>
<reference key="3">
    <citation type="journal article" date="2019" name="Front. Cell. Neurosci.">
        <title>Functional Dissection of C. elegans bZip-Protein CEBP-1 Reveals Novel Structural Motifs Required for Axon Regeneration and Nuclear Import.</title>
        <authorList>
            <person name="Malinow R.A."/>
            <person name="Ying P."/>
            <person name="Koorman T."/>
            <person name="Boxem M."/>
            <person name="Jin Y."/>
            <person name="Kim K.W."/>
        </authorList>
    </citation>
    <scope>FUNCTION</scope>
    <scope>INTERACTION WITH CEBP-1</scope>
    <scope>TISSUE SPECIFICITY</scope>
    <scope>DISRUPTION PHENOTYPE</scope>
</reference>
<reference evidence="6" key="4">
    <citation type="journal article" date="2021" name="Elife">
        <title>Ca2+/CaM binding to CaMKI promotes IMA-3 importin binding and nuclear translocation in sensory neurons to control behavioral adaptation.</title>
        <authorList>
            <person name="Ippolito D."/>
            <person name="Thapliyal S."/>
            <person name="Glauser D.A."/>
        </authorList>
    </citation>
    <scope>INTERACTION WITH CMK-1</scope>
</reference>
<proteinExistence type="evidence at protein level"/>